<sequence>MSLKFTNTLSKKKEDFISINPNQVKIYCCGVTVYDLCHLGHARSYLNWDVLRRFLIWKGFEVKFVQNFTDIDDKIINRANKEGCSTDELSERNIDEFHKDMDTLSILRPTSMPRATKCLHQIINFIEELEQKKVAYSSNGDVYFSVNKHKNYGKLSGREIENQIDNAAGRLKTNQKESKKNSLDFALWKKSNSGEVSYSSPWGNGRPGWHIECSAMVKQELGESIDIHLGGSDLIFPHHENEIAQSEACNGKELAKYWLHNGMVNVGGEKMSKSLGNFTTIRSLLEEGISPMTLRFFVLQTNYRKPLDFTQEALKAASKGWERLNNCLSFGYIYKIKDQAKNEIILDKPIKKSANTNLDKESFKLLSDFERYMDDDLNTSGALSILFELSQPIRKIINFLKEKDINEVDQDELNQVFYKWELLSELAAVLGLKVNLNHENPKNNPELDTNKIEELIKKRSLAKANKDFLLADKIRDDFKNIGIDLIDKPKGVTEWKQLSD</sequence>
<reference key="1">
    <citation type="journal article" date="2007" name="PLoS Genet.">
        <title>Patterns and implications of gene gain and loss in the evolution of Prochlorococcus.</title>
        <authorList>
            <person name="Kettler G.C."/>
            <person name="Martiny A.C."/>
            <person name="Huang K."/>
            <person name="Zucker J."/>
            <person name="Coleman M.L."/>
            <person name="Rodrigue S."/>
            <person name="Chen F."/>
            <person name="Lapidus A."/>
            <person name="Ferriera S."/>
            <person name="Johnson J."/>
            <person name="Steglich C."/>
            <person name="Church G.M."/>
            <person name="Richardson P."/>
            <person name="Chisholm S.W."/>
        </authorList>
    </citation>
    <scope>NUCLEOTIDE SEQUENCE [LARGE SCALE GENOMIC DNA]</scope>
    <source>
        <strain>NATL1A</strain>
    </source>
</reference>
<proteinExistence type="inferred from homology"/>
<gene>
    <name evidence="1" type="primary">cysS</name>
    <name type="ordered locus">NATL1_15891</name>
</gene>
<organism>
    <name type="scientific">Prochlorococcus marinus (strain NATL1A)</name>
    <dbReference type="NCBI Taxonomy" id="167555"/>
    <lineage>
        <taxon>Bacteria</taxon>
        <taxon>Bacillati</taxon>
        <taxon>Cyanobacteriota</taxon>
        <taxon>Cyanophyceae</taxon>
        <taxon>Synechococcales</taxon>
        <taxon>Prochlorococcaceae</taxon>
        <taxon>Prochlorococcus</taxon>
    </lineage>
</organism>
<feature type="chain" id="PRO_1000071075" description="Cysteine--tRNA ligase">
    <location>
        <begin position="1"/>
        <end position="500"/>
    </location>
</feature>
<feature type="short sequence motif" description="'HIGH' region">
    <location>
        <begin position="31"/>
        <end position="41"/>
    </location>
</feature>
<feature type="short sequence motif" description="'KMSKS' region">
    <location>
        <begin position="270"/>
        <end position="274"/>
    </location>
</feature>
<feature type="binding site" evidence="1">
    <location>
        <position position="29"/>
    </location>
    <ligand>
        <name>Zn(2+)</name>
        <dbReference type="ChEBI" id="CHEBI:29105"/>
    </ligand>
</feature>
<feature type="binding site" evidence="1">
    <location>
        <position position="213"/>
    </location>
    <ligand>
        <name>Zn(2+)</name>
        <dbReference type="ChEBI" id="CHEBI:29105"/>
    </ligand>
</feature>
<feature type="binding site" evidence="1">
    <location>
        <position position="238"/>
    </location>
    <ligand>
        <name>Zn(2+)</name>
        <dbReference type="ChEBI" id="CHEBI:29105"/>
    </ligand>
</feature>
<feature type="binding site" evidence="1">
    <location>
        <position position="242"/>
    </location>
    <ligand>
        <name>Zn(2+)</name>
        <dbReference type="ChEBI" id="CHEBI:29105"/>
    </ligand>
</feature>
<feature type="binding site" evidence="1">
    <location>
        <position position="273"/>
    </location>
    <ligand>
        <name>ATP</name>
        <dbReference type="ChEBI" id="CHEBI:30616"/>
    </ligand>
</feature>
<name>SYC_PROM1</name>
<keyword id="KW-0030">Aminoacyl-tRNA synthetase</keyword>
<keyword id="KW-0067">ATP-binding</keyword>
<keyword id="KW-0963">Cytoplasm</keyword>
<keyword id="KW-0436">Ligase</keyword>
<keyword id="KW-0479">Metal-binding</keyword>
<keyword id="KW-0547">Nucleotide-binding</keyword>
<keyword id="KW-0648">Protein biosynthesis</keyword>
<keyword id="KW-0862">Zinc</keyword>
<dbReference type="EC" id="6.1.1.16" evidence="1"/>
<dbReference type="EMBL" id="CP000553">
    <property type="protein sequence ID" value="ABM76146.1"/>
    <property type="molecule type" value="Genomic_DNA"/>
</dbReference>
<dbReference type="RefSeq" id="WP_011824158.1">
    <property type="nucleotide sequence ID" value="NC_008819.1"/>
</dbReference>
<dbReference type="SMR" id="A2C3T6"/>
<dbReference type="KEGG" id="pme:NATL1_15891"/>
<dbReference type="eggNOG" id="COG0215">
    <property type="taxonomic scope" value="Bacteria"/>
</dbReference>
<dbReference type="HOGENOM" id="CLU_013528_0_1_3"/>
<dbReference type="Proteomes" id="UP000002592">
    <property type="component" value="Chromosome"/>
</dbReference>
<dbReference type="GO" id="GO:0005829">
    <property type="term" value="C:cytosol"/>
    <property type="evidence" value="ECO:0007669"/>
    <property type="project" value="TreeGrafter"/>
</dbReference>
<dbReference type="GO" id="GO:0005524">
    <property type="term" value="F:ATP binding"/>
    <property type="evidence" value="ECO:0007669"/>
    <property type="project" value="UniProtKB-UniRule"/>
</dbReference>
<dbReference type="GO" id="GO:0004817">
    <property type="term" value="F:cysteine-tRNA ligase activity"/>
    <property type="evidence" value="ECO:0007669"/>
    <property type="project" value="UniProtKB-UniRule"/>
</dbReference>
<dbReference type="GO" id="GO:0008270">
    <property type="term" value="F:zinc ion binding"/>
    <property type="evidence" value="ECO:0007669"/>
    <property type="project" value="UniProtKB-UniRule"/>
</dbReference>
<dbReference type="GO" id="GO:0006423">
    <property type="term" value="P:cysteinyl-tRNA aminoacylation"/>
    <property type="evidence" value="ECO:0007669"/>
    <property type="project" value="UniProtKB-UniRule"/>
</dbReference>
<dbReference type="CDD" id="cd00672">
    <property type="entry name" value="CysRS_core"/>
    <property type="match status" value="1"/>
</dbReference>
<dbReference type="FunFam" id="3.40.50.620:FF:000009">
    <property type="entry name" value="Cysteine--tRNA ligase"/>
    <property type="match status" value="1"/>
</dbReference>
<dbReference type="Gene3D" id="1.20.120.1910">
    <property type="entry name" value="Cysteine-tRNA ligase, C-terminal anti-codon recognition domain"/>
    <property type="match status" value="1"/>
</dbReference>
<dbReference type="Gene3D" id="3.40.50.620">
    <property type="entry name" value="HUPs"/>
    <property type="match status" value="1"/>
</dbReference>
<dbReference type="HAMAP" id="MF_00041">
    <property type="entry name" value="Cys_tRNA_synth"/>
    <property type="match status" value="1"/>
</dbReference>
<dbReference type="InterPro" id="IPR015803">
    <property type="entry name" value="Cys-tRNA-ligase"/>
</dbReference>
<dbReference type="InterPro" id="IPR015273">
    <property type="entry name" value="Cys-tRNA-synt_Ia_DALR"/>
</dbReference>
<dbReference type="InterPro" id="IPR024909">
    <property type="entry name" value="Cys-tRNA/MSH_ligase"/>
</dbReference>
<dbReference type="InterPro" id="IPR014729">
    <property type="entry name" value="Rossmann-like_a/b/a_fold"/>
</dbReference>
<dbReference type="InterPro" id="IPR032678">
    <property type="entry name" value="tRNA-synt_1_cat_dom"/>
</dbReference>
<dbReference type="InterPro" id="IPR009080">
    <property type="entry name" value="tRNAsynth_Ia_anticodon-bd"/>
</dbReference>
<dbReference type="NCBIfam" id="TIGR00435">
    <property type="entry name" value="cysS"/>
    <property type="match status" value="1"/>
</dbReference>
<dbReference type="PANTHER" id="PTHR10890:SF3">
    <property type="entry name" value="CYSTEINE--TRNA LIGASE, CYTOPLASMIC"/>
    <property type="match status" value="1"/>
</dbReference>
<dbReference type="PANTHER" id="PTHR10890">
    <property type="entry name" value="CYSTEINYL-TRNA SYNTHETASE"/>
    <property type="match status" value="1"/>
</dbReference>
<dbReference type="Pfam" id="PF09190">
    <property type="entry name" value="DALR_2"/>
    <property type="match status" value="1"/>
</dbReference>
<dbReference type="Pfam" id="PF01406">
    <property type="entry name" value="tRNA-synt_1e"/>
    <property type="match status" value="1"/>
</dbReference>
<dbReference type="PRINTS" id="PR00983">
    <property type="entry name" value="TRNASYNTHCYS"/>
</dbReference>
<dbReference type="SMART" id="SM00840">
    <property type="entry name" value="DALR_2"/>
    <property type="match status" value="1"/>
</dbReference>
<dbReference type="SUPFAM" id="SSF47323">
    <property type="entry name" value="Anticodon-binding domain of a subclass of class I aminoacyl-tRNA synthetases"/>
    <property type="match status" value="1"/>
</dbReference>
<dbReference type="SUPFAM" id="SSF52374">
    <property type="entry name" value="Nucleotidylyl transferase"/>
    <property type="match status" value="1"/>
</dbReference>
<protein>
    <recommendedName>
        <fullName evidence="1">Cysteine--tRNA ligase</fullName>
        <ecNumber evidence="1">6.1.1.16</ecNumber>
    </recommendedName>
    <alternativeName>
        <fullName evidence="1">Cysteinyl-tRNA synthetase</fullName>
        <shortName evidence="1">CysRS</shortName>
    </alternativeName>
</protein>
<accession>A2C3T6</accession>
<comment type="catalytic activity">
    <reaction evidence="1">
        <text>tRNA(Cys) + L-cysteine + ATP = L-cysteinyl-tRNA(Cys) + AMP + diphosphate</text>
        <dbReference type="Rhea" id="RHEA:17773"/>
        <dbReference type="Rhea" id="RHEA-COMP:9661"/>
        <dbReference type="Rhea" id="RHEA-COMP:9679"/>
        <dbReference type="ChEBI" id="CHEBI:30616"/>
        <dbReference type="ChEBI" id="CHEBI:33019"/>
        <dbReference type="ChEBI" id="CHEBI:35235"/>
        <dbReference type="ChEBI" id="CHEBI:78442"/>
        <dbReference type="ChEBI" id="CHEBI:78517"/>
        <dbReference type="ChEBI" id="CHEBI:456215"/>
        <dbReference type="EC" id="6.1.1.16"/>
    </reaction>
</comment>
<comment type="cofactor">
    <cofactor evidence="1">
        <name>Zn(2+)</name>
        <dbReference type="ChEBI" id="CHEBI:29105"/>
    </cofactor>
    <text evidence="1">Binds 1 zinc ion per subunit.</text>
</comment>
<comment type="subunit">
    <text evidence="1">Monomer.</text>
</comment>
<comment type="subcellular location">
    <subcellularLocation>
        <location evidence="1">Cytoplasm</location>
    </subcellularLocation>
</comment>
<comment type="similarity">
    <text evidence="1">Belongs to the class-I aminoacyl-tRNA synthetase family.</text>
</comment>
<evidence type="ECO:0000255" key="1">
    <source>
        <dbReference type="HAMAP-Rule" id="MF_00041"/>
    </source>
</evidence>